<sequence>MAKKNPKILSIVLAGGEGTRLMPLTRDRAKPAVPFGGVYRLIDFPLSNLVNSGYSQVIVLTQYKSHSLDRHISQLWRFSTLLGNYVSPVPAQQRLGKHWYLGSADAVYQTINIIEDVQPDIVVIVGADHVYRMDFEQMVNQHIESGAEFTVAGIRQPIEQSSQFGVIEVDPEHPNMIKSFQEKPKETTGLPDNPNEILASMGNYVANTDALFNALSIDSKAENTKHDMGGDIAPFFAERNEAGVYDFSRNEIPGATTTDHAYWRDVGTIRQFYDAHMDLISYIPEFNLYNMEWPIYTSSGNLPPAKFVHAAGDRIGHATDSIVSPGVIVSGGEIHHSVISPNVRVHSWSQVNDSILFDNVEINRRARVNRAILDKNVVLTENSTVGLDVEHDLARGFTVTSDGITVVPKGTVVDD</sequence>
<dbReference type="EC" id="2.7.7.27" evidence="1"/>
<dbReference type="EMBL" id="CP001213">
    <property type="protein sequence ID" value="ACL29713.1"/>
    <property type="molecule type" value="Genomic_DNA"/>
</dbReference>
<dbReference type="RefSeq" id="WP_004217843.1">
    <property type="nucleotide sequence ID" value="NC_011835.1"/>
</dbReference>
<dbReference type="SMR" id="B8DUN4"/>
<dbReference type="STRING" id="442563.BLA_1428"/>
<dbReference type="GeneID" id="29695611"/>
<dbReference type="KEGG" id="bla:BLA_1428"/>
<dbReference type="HOGENOM" id="CLU_029499_14_1_11"/>
<dbReference type="UniPathway" id="UPA00164"/>
<dbReference type="Proteomes" id="UP000002456">
    <property type="component" value="Chromosome"/>
</dbReference>
<dbReference type="GO" id="GO:0005524">
    <property type="term" value="F:ATP binding"/>
    <property type="evidence" value="ECO:0007669"/>
    <property type="project" value="UniProtKB-KW"/>
</dbReference>
<dbReference type="GO" id="GO:0008878">
    <property type="term" value="F:glucose-1-phosphate adenylyltransferase activity"/>
    <property type="evidence" value="ECO:0007669"/>
    <property type="project" value="UniProtKB-UniRule"/>
</dbReference>
<dbReference type="GO" id="GO:0005978">
    <property type="term" value="P:glycogen biosynthetic process"/>
    <property type="evidence" value="ECO:0007669"/>
    <property type="project" value="UniProtKB-UniRule"/>
</dbReference>
<dbReference type="CDD" id="cd02508">
    <property type="entry name" value="ADP_Glucose_PP"/>
    <property type="match status" value="1"/>
</dbReference>
<dbReference type="CDD" id="cd04651">
    <property type="entry name" value="LbH_G1P_AT_C"/>
    <property type="match status" value="1"/>
</dbReference>
<dbReference type="Gene3D" id="2.160.10.10">
    <property type="entry name" value="Hexapeptide repeat proteins"/>
    <property type="match status" value="1"/>
</dbReference>
<dbReference type="Gene3D" id="3.90.550.10">
    <property type="entry name" value="Spore Coat Polysaccharide Biosynthesis Protein SpsA, Chain A"/>
    <property type="match status" value="1"/>
</dbReference>
<dbReference type="HAMAP" id="MF_00624">
    <property type="entry name" value="GlgC"/>
    <property type="match status" value="1"/>
</dbReference>
<dbReference type="InterPro" id="IPR011831">
    <property type="entry name" value="ADP-Glc_PPase"/>
</dbReference>
<dbReference type="InterPro" id="IPR005836">
    <property type="entry name" value="ADP_Glu_pyroP_CS"/>
</dbReference>
<dbReference type="InterPro" id="IPR023049">
    <property type="entry name" value="GlgC_bac"/>
</dbReference>
<dbReference type="InterPro" id="IPR056818">
    <property type="entry name" value="GlmU/GlgC-like_hexapep"/>
</dbReference>
<dbReference type="InterPro" id="IPR005835">
    <property type="entry name" value="NTP_transferase_dom"/>
</dbReference>
<dbReference type="InterPro" id="IPR029044">
    <property type="entry name" value="Nucleotide-diphossugar_trans"/>
</dbReference>
<dbReference type="InterPro" id="IPR011004">
    <property type="entry name" value="Trimer_LpxA-like_sf"/>
</dbReference>
<dbReference type="NCBIfam" id="TIGR02091">
    <property type="entry name" value="glgC"/>
    <property type="match status" value="1"/>
</dbReference>
<dbReference type="NCBIfam" id="NF001947">
    <property type="entry name" value="PRK00725.1"/>
    <property type="match status" value="1"/>
</dbReference>
<dbReference type="NCBIfam" id="NF002023">
    <property type="entry name" value="PRK00844.1"/>
    <property type="match status" value="1"/>
</dbReference>
<dbReference type="PANTHER" id="PTHR43523:SF2">
    <property type="entry name" value="GLUCOSE-1-PHOSPHATE ADENYLYLTRANSFERASE"/>
    <property type="match status" value="1"/>
</dbReference>
<dbReference type="PANTHER" id="PTHR43523">
    <property type="entry name" value="GLUCOSE-1-PHOSPHATE ADENYLYLTRANSFERASE-RELATED"/>
    <property type="match status" value="1"/>
</dbReference>
<dbReference type="Pfam" id="PF24894">
    <property type="entry name" value="Hexapep_GlmU"/>
    <property type="match status" value="1"/>
</dbReference>
<dbReference type="Pfam" id="PF00483">
    <property type="entry name" value="NTP_transferase"/>
    <property type="match status" value="1"/>
</dbReference>
<dbReference type="SUPFAM" id="SSF53448">
    <property type="entry name" value="Nucleotide-diphospho-sugar transferases"/>
    <property type="match status" value="1"/>
</dbReference>
<dbReference type="SUPFAM" id="SSF51161">
    <property type="entry name" value="Trimeric LpxA-like enzymes"/>
    <property type="match status" value="1"/>
</dbReference>
<dbReference type="PROSITE" id="PS00808">
    <property type="entry name" value="ADP_GLC_PYROPHOSPH_1"/>
    <property type="match status" value="1"/>
</dbReference>
<dbReference type="PROSITE" id="PS00809">
    <property type="entry name" value="ADP_GLC_PYROPHOSPH_2"/>
    <property type="match status" value="1"/>
</dbReference>
<accession>B8DUN4</accession>
<keyword id="KW-0067">ATP-binding</keyword>
<keyword id="KW-0119">Carbohydrate metabolism</keyword>
<keyword id="KW-0320">Glycogen biosynthesis</keyword>
<keyword id="KW-0321">Glycogen metabolism</keyword>
<keyword id="KW-0547">Nucleotide-binding</keyword>
<keyword id="KW-0548">Nucleotidyltransferase</keyword>
<keyword id="KW-1185">Reference proteome</keyword>
<keyword id="KW-0808">Transferase</keyword>
<organism>
    <name type="scientific">Bifidobacterium animalis subsp. lactis (strain AD011)</name>
    <dbReference type="NCBI Taxonomy" id="442563"/>
    <lineage>
        <taxon>Bacteria</taxon>
        <taxon>Bacillati</taxon>
        <taxon>Actinomycetota</taxon>
        <taxon>Actinomycetes</taxon>
        <taxon>Bifidobacteriales</taxon>
        <taxon>Bifidobacteriaceae</taxon>
        <taxon>Bifidobacterium</taxon>
    </lineage>
</organism>
<name>GLGC_BIFA0</name>
<protein>
    <recommendedName>
        <fullName evidence="1">Glucose-1-phosphate adenylyltransferase</fullName>
        <ecNumber evidence="1">2.7.7.27</ecNumber>
    </recommendedName>
    <alternativeName>
        <fullName evidence="1">ADP-glucose pyrophosphorylase</fullName>
        <shortName evidence="1">ADPGlc PPase</shortName>
    </alternativeName>
    <alternativeName>
        <fullName evidence="1">ADP-glucose synthase</fullName>
    </alternativeName>
</protein>
<comment type="function">
    <text evidence="1">Involved in the biosynthesis of ADP-glucose, a building block required for the elongation reactions to produce glycogen. Catalyzes the reaction between ATP and alpha-D-glucose 1-phosphate (G1P) to produce pyrophosphate and ADP-Glc.</text>
</comment>
<comment type="catalytic activity">
    <reaction evidence="1">
        <text>alpha-D-glucose 1-phosphate + ATP + H(+) = ADP-alpha-D-glucose + diphosphate</text>
        <dbReference type="Rhea" id="RHEA:12120"/>
        <dbReference type="ChEBI" id="CHEBI:15378"/>
        <dbReference type="ChEBI" id="CHEBI:30616"/>
        <dbReference type="ChEBI" id="CHEBI:33019"/>
        <dbReference type="ChEBI" id="CHEBI:57498"/>
        <dbReference type="ChEBI" id="CHEBI:58601"/>
        <dbReference type="EC" id="2.7.7.27"/>
    </reaction>
</comment>
<comment type="pathway">
    <text evidence="1">Glycan biosynthesis; glycogen biosynthesis.</text>
</comment>
<comment type="subunit">
    <text evidence="1">Homotetramer.</text>
</comment>
<comment type="similarity">
    <text evidence="1">Belongs to the bacterial/plant glucose-1-phosphate adenylyltransferase family.</text>
</comment>
<proteinExistence type="inferred from homology"/>
<evidence type="ECO:0000255" key="1">
    <source>
        <dbReference type="HAMAP-Rule" id="MF_00624"/>
    </source>
</evidence>
<reference key="1">
    <citation type="journal article" date="2009" name="J. Bacteriol.">
        <title>Genome sequence of the probiotic bacterium Bifidobacterium animalis subsp. lactis AD011.</title>
        <authorList>
            <person name="Kim J.F."/>
            <person name="Jeong H."/>
            <person name="Yu D.S."/>
            <person name="Choi S.-H."/>
            <person name="Hur C.-G."/>
            <person name="Park M.-S."/>
            <person name="Yoon S.H."/>
            <person name="Kim D.-W."/>
            <person name="Ji G.E."/>
            <person name="Park H.-S."/>
            <person name="Oh T.K."/>
        </authorList>
    </citation>
    <scope>NUCLEOTIDE SEQUENCE [LARGE SCALE GENOMIC DNA]</scope>
    <source>
        <strain>AD011</strain>
    </source>
</reference>
<gene>
    <name evidence="1" type="primary">glgC</name>
    <name type="ordered locus">BLA_1428</name>
</gene>
<feature type="chain" id="PRO_1000147220" description="Glucose-1-phosphate adenylyltransferase">
    <location>
        <begin position="1"/>
        <end position="415"/>
    </location>
</feature>
<feature type="binding site" evidence="1">
    <location>
        <position position="100"/>
    </location>
    <ligand>
        <name>alpha-D-glucose 1-phosphate</name>
        <dbReference type="ChEBI" id="CHEBI:58601"/>
    </ligand>
</feature>
<feature type="binding site" evidence="1">
    <location>
        <position position="165"/>
    </location>
    <ligand>
        <name>alpha-D-glucose 1-phosphate</name>
        <dbReference type="ChEBI" id="CHEBI:58601"/>
    </ligand>
</feature>
<feature type="binding site" evidence="1">
    <location>
        <begin position="182"/>
        <end position="183"/>
    </location>
    <ligand>
        <name>alpha-D-glucose 1-phosphate</name>
        <dbReference type="ChEBI" id="CHEBI:58601"/>
    </ligand>
</feature>
<feature type="binding site" evidence="1">
    <location>
        <position position="200"/>
    </location>
    <ligand>
        <name>alpha-D-glucose 1-phosphate</name>
        <dbReference type="ChEBI" id="CHEBI:58601"/>
    </ligand>
</feature>